<protein>
    <recommendedName>
        <fullName evidence="1">Large ribosomal subunit protein bL33</fullName>
    </recommendedName>
    <alternativeName>
        <fullName evidence="2">50S ribosomal protein L33</fullName>
    </alternativeName>
</protein>
<organism>
    <name type="scientific">Lacticaseibacillus casei (strain BL23)</name>
    <name type="common">Lactobacillus casei</name>
    <dbReference type="NCBI Taxonomy" id="543734"/>
    <lineage>
        <taxon>Bacteria</taxon>
        <taxon>Bacillati</taxon>
        <taxon>Bacillota</taxon>
        <taxon>Bacilli</taxon>
        <taxon>Lactobacillales</taxon>
        <taxon>Lactobacillaceae</taxon>
        <taxon>Lacticaseibacillus</taxon>
    </lineage>
</organism>
<gene>
    <name evidence="1" type="primary">rpmG</name>
    <name type="ordered locus">LCABL_20700</name>
</gene>
<accession>B3W8W8</accession>
<dbReference type="EMBL" id="FM177140">
    <property type="protein sequence ID" value="CAQ67137.1"/>
    <property type="molecule type" value="Genomic_DNA"/>
</dbReference>
<dbReference type="SMR" id="B3W8W8"/>
<dbReference type="KEGG" id="lcb:LCABL_20700"/>
<dbReference type="HOGENOM" id="CLU_190949_3_2_9"/>
<dbReference type="GO" id="GO:0005737">
    <property type="term" value="C:cytoplasm"/>
    <property type="evidence" value="ECO:0007669"/>
    <property type="project" value="UniProtKB-ARBA"/>
</dbReference>
<dbReference type="GO" id="GO:1990904">
    <property type="term" value="C:ribonucleoprotein complex"/>
    <property type="evidence" value="ECO:0007669"/>
    <property type="project" value="UniProtKB-KW"/>
</dbReference>
<dbReference type="GO" id="GO:0005840">
    <property type="term" value="C:ribosome"/>
    <property type="evidence" value="ECO:0007669"/>
    <property type="project" value="UniProtKB-KW"/>
</dbReference>
<dbReference type="GO" id="GO:0003735">
    <property type="term" value="F:structural constituent of ribosome"/>
    <property type="evidence" value="ECO:0007669"/>
    <property type="project" value="InterPro"/>
</dbReference>
<dbReference type="GO" id="GO:0006412">
    <property type="term" value="P:translation"/>
    <property type="evidence" value="ECO:0007669"/>
    <property type="project" value="UniProtKB-UniRule"/>
</dbReference>
<dbReference type="Gene3D" id="2.20.28.120">
    <property type="entry name" value="Ribosomal protein L33"/>
    <property type="match status" value="1"/>
</dbReference>
<dbReference type="HAMAP" id="MF_00294">
    <property type="entry name" value="Ribosomal_bL33"/>
    <property type="match status" value="1"/>
</dbReference>
<dbReference type="InterPro" id="IPR001705">
    <property type="entry name" value="Ribosomal_bL33"/>
</dbReference>
<dbReference type="InterPro" id="IPR018264">
    <property type="entry name" value="Ribosomal_bL33_CS"/>
</dbReference>
<dbReference type="InterPro" id="IPR038584">
    <property type="entry name" value="Ribosomal_bL33_sf"/>
</dbReference>
<dbReference type="InterPro" id="IPR011332">
    <property type="entry name" value="Ribosomal_zn-bd"/>
</dbReference>
<dbReference type="NCBIfam" id="NF001764">
    <property type="entry name" value="PRK00504.1"/>
    <property type="match status" value="1"/>
</dbReference>
<dbReference type="NCBIfam" id="NF001860">
    <property type="entry name" value="PRK00595.1"/>
    <property type="match status" value="1"/>
</dbReference>
<dbReference type="NCBIfam" id="TIGR01023">
    <property type="entry name" value="rpmG_bact"/>
    <property type="match status" value="1"/>
</dbReference>
<dbReference type="PANTHER" id="PTHR43168">
    <property type="entry name" value="50S RIBOSOMAL PROTEIN L33, CHLOROPLASTIC"/>
    <property type="match status" value="1"/>
</dbReference>
<dbReference type="PANTHER" id="PTHR43168:SF2">
    <property type="entry name" value="LARGE RIBOSOMAL SUBUNIT PROTEIN BL33C"/>
    <property type="match status" value="1"/>
</dbReference>
<dbReference type="Pfam" id="PF00471">
    <property type="entry name" value="Ribosomal_L33"/>
    <property type="match status" value="1"/>
</dbReference>
<dbReference type="SUPFAM" id="SSF57829">
    <property type="entry name" value="Zn-binding ribosomal proteins"/>
    <property type="match status" value="1"/>
</dbReference>
<dbReference type="PROSITE" id="PS00582">
    <property type="entry name" value="RIBOSOMAL_L33"/>
    <property type="match status" value="1"/>
</dbReference>
<reference key="1">
    <citation type="submission" date="2008-06" db="EMBL/GenBank/DDBJ databases">
        <title>Lactobacillus casei BL23 complete genome sequence.</title>
        <authorList>
            <person name="Maze A."/>
            <person name="Boel G."/>
            <person name="Bourand A."/>
            <person name="Loux V."/>
            <person name="Gibrat J.F."/>
            <person name="Zuniga M."/>
            <person name="Hartke A."/>
            <person name="Deutscher J."/>
        </authorList>
    </citation>
    <scope>NUCLEOTIDE SEQUENCE [LARGE SCALE GENOMIC DNA]</scope>
    <source>
        <strain>BL23</strain>
    </source>
</reference>
<evidence type="ECO:0000255" key="1">
    <source>
        <dbReference type="HAMAP-Rule" id="MF_00294"/>
    </source>
</evidence>
<evidence type="ECO:0000305" key="2"/>
<keyword id="KW-0687">Ribonucleoprotein</keyword>
<keyword id="KW-0689">Ribosomal protein</keyword>
<name>RL33_LACCB</name>
<proteinExistence type="inferred from homology"/>
<feature type="chain" id="PRO_0000356496" description="Large ribosomal subunit protein bL33">
    <location>
        <begin position="1"/>
        <end position="49"/>
    </location>
</feature>
<comment type="similarity">
    <text evidence="1">Belongs to the bacterial ribosomal protein bL33 family.</text>
</comment>
<sequence>MRNNIILGNNETGERIYLTSKNKRNTPDRLQLKKYSPKLRKRVVFTEVK</sequence>